<feature type="initiator methionine" description="Removed" evidence="8">
    <location>
        <position position="1"/>
    </location>
</feature>
<feature type="chain" id="PRO_0000205780" description="Clathrin heavy chain 1">
    <location>
        <begin position="2"/>
        <end position="1675"/>
    </location>
</feature>
<feature type="repeat" description="CHCR 1">
    <location>
        <begin position="537"/>
        <end position="683"/>
    </location>
</feature>
<feature type="repeat" description="CHCR 2">
    <location>
        <begin position="686"/>
        <end position="828"/>
    </location>
</feature>
<feature type="repeat" description="CHCR 3">
    <location>
        <begin position="833"/>
        <end position="972"/>
    </location>
</feature>
<feature type="repeat" description="CHCR 4">
    <location>
        <begin position="979"/>
        <end position="1124"/>
    </location>
</feature>
<feature type="repeat" description="CHCR 5">
    <location>
        <begin position="1128"/>
        <end position="1269"/>
    </location>
</feature>
<feature type="repeat" description="CHCR 6">
    <location>
        <begin position="1274"/>
        <end position="1420"/>
    </location>
</feature>
<feature type="repeat" description="CHCR 7">
    <location>
        <begin position="1423"/>
        <end position="1566"/>
    </location>
</feature>
<feature type="region of interest" description="Globular terminal domain">
    <location>
        <begin position="2"/>
        <end position="479"/>
    </location>
</feature>
<feature type="region of interest" description="WD40-like repeat 1">
    <location>
        <begin position="24"/>
        <end position="67"/>
    </location>
</feature>
<feature type="region of interest" description="WD40-like repeat 2">
    <location>
        <begin position="68"/>
        <end position="107"/>
    </location>
</feature>
<feature type="region of interest" description="WD40-like repeat 3">
    <location>
        <begin position="108"/>
        <end position="149"/>
    </location>
</feature>
<feature type="region of interest" description="WD40-like repeat 4">
    <location>
        <begin position="150"/>
        <end position="195"/>
    </location>
</feature>
<feature type="region of interest" description="WD40-like repeat 5">
    <location>
        <begin position="196"/>
        <end position="257"/>
    </location>
</feature>
<feature type="region of interest" description="WD40-like repeat 6">
    <location>
        <begin position="258"/>
        <end position="301"/>
    </location>
</feature>
<feature type="region of interest" description="WD40-like repeat 7">
    <location>
        <begin position="302"/>
        <end position="330"/>
    </location>
</feature>
<feature type="region of interest" description="Binding site for the uncoating ATPase, involved in lattice disassembly" evidence="5">
    <location>
        <begin position="449"/>
        <end position="465"/>
    </location>
</feature>
<feature type="region of interest" description="Flexible linker">
    <location>
        <begin position="480"/>
        <end position="523"/>
    </location>
</feature>
<feature type="region of interest" description="Heavy chain arm">
    <location>
        <begin position="524"/>
        <end position="1675"/>
    </location>
</feature>
<feature type="region of interest" description="Distal segment">
    <location>
        <begin position="524"/>
        <end position="634"/>
    </location>
</feature>
<feature type="region of interest" description="Proximal segment">
    <location>
        <begin position="639"/>
        <end position="1675"/>
    </location>
</feature>
<feature type="region of interest" description="Involved in binding clathrin light chain" evidence="1">
    <location>
        <begin position="1213"/>
        <end position="1522"/>
    </location>
</feature>
<feature type="region of interest" description="Trimerization" evidence="1">
    <location>
        <begin position="1550"/>
        <end position="1675"/>
    </location>
</feature>
<feature type="modified residue" description="N-acetylalanine" evidence="8">
    <location>
        <position position="2"/>
    </location>
</feature>
<feature type="modified residue" description="Phosphoserine" evidence="3">
    <location>
        <position position="67"/>
    </location>
</feature>
<feature type="modified residue" description="Phosphothreonine" evidence="11">
    <location>
        <position position="105"/>
    </location>
</feature>
<feature type="modified residue" description="Phosphotyrosine" evidence="4">
    <location>
        <position position="184"/>
    </location>
</feature>
<feature type="modified residue" description="Phosphothreonine" evidence="11">
    <location>
        <position position="394"/>
    </location>
</feature>
<feature type="modified residue" description="Phosphotyrosine" evidence="3">
    <location>
        <position position="634"/>
    </location>
</feature>
<feature type="modified residue" description="N6-succinyllysine" evidence="4">
    <location>
        <position position="737"/>
    </location>
</feature>
<feature type="modified residue" description="N6-acetyllysine" evidence="3">
    <location>
        <position position="856"/>
    </location>
</feature>
<feature type="modified residue" description="Phosphotyrosine" evidence="4">
    <location>
        <position position="899"/>
    </location>
</feature>
<feature type="modified residue" description="Phosphoserine" evidence="4">
    <location>
        <position position="1167"/>
    </location>
</feature>
<feature type="modified residue" description="Phosphotyrosine" evidence="4">
    <location>
        <position position="1206"/>
    </location>
</feature>
<feature type="modified residue" description="Phosphoserine" evidence="3">
    <location>
        <position position="1229"/>
    </location>
</feature>
<feature type="modified residue" description="N6-acetyllysine; alternate" evidence="3">
    <location>
        <position position="1441"/>
    </location>
</feature>
<feature type="modified residue" description="N6-succinyllysine; alternate" evidence="4">
    <location>
        <position position="1441"/>
    </location>
</feature>
<feature type="modified residue" description="Phosphotyrosine" evidence="3">
    <location>
        <position position="1477"/>
    </location>
</feature>
<feature type="modified residue" description="Phosphotyrosine" evidence="4">
    <location>
        <position position="1487"/>
    </location>
</feature>
<feature type="modified residue" description="Phosphoserine" evidence="11">
    <location>
        <position position="1494"/>
    </location>
</feature>
<feature type="modified residue" description="N6-acetyllysine" evidence="3">
    <location>
        <position position="1501"/>
    </location>
</feature>
<feature type="strand" evidence="12">
    <location>
        <begin position="7"/>
        <end position="14"/>
    </location>
</feature>
<feature type="helix" evidence="12">
    <location>
        <begin position="15"/>
        <end position="18"/>
    </location>
</feature>
<feature type="helix" evidence="13">
    <location>
        <begin position="22"/>
        <end position="24"/>
    </location>
</feature>
<feature type="turn" evidence="12">
    <location>
        <begin position="27"/>
        <end position="29"/>
    </location>
</feature>
<feature type="strand" evidence="12">
    <location>
        <begin position="30"/>
        <end position="34"/>
    </location>
</feature>
<feature type="strand" evidence="12">
    <location>
        <begin position="37"/>
        <end position="42"/>
    </location>
</feature>
<feature type="strand" evidence="12">
    <location>
        <begin position="49"/>
        <end position="54"/>
    </location>
</feature>
<feature type="strand" evidence="12">
    <location>
        <begin position="62"/>
        <end position="65"/>
    </location>
</feature>
<feature type="strand" evidence="12">
    <location>
        <begin position="71"/>
        <end position="73"/>
    </location>
</feature>
<feature type="strand" evidence="12">
    <location>
        <begin position="75"/>
        <end position="78"/>
    </location>
</feature>
<feature type="strand" evidence="12">
    <location>
        <begin position="80"/>
        <end position="84"/>
    </location>
</feature>
<feature type="strand" evidence="12">
    <location>
        <begin position="87"/>
        <end position="92"/>
    </location>
</feature>
<feature type="turn" evidence="12">
    <location>
        <begin position="93"/>
        <end position="96"/>
    </location>
</feature>
<feature type="strand" evidence="12">
    <location>
        <begin position="97"/>
        <end position="103"/>
    </location>
</feature>
<feature type="strand" evidence="12">
    <location>
        <begin position="110"/>
        <end position="115"/>
    </location>
</feature>
<feature type="strand" evidence="12">
    <location>
        <begin position="118"/>
        <end position="122"/>
    </location>
</feature>
<feature type="strand" evidence="12">
    <location>
        <begin position="124"/>
        <end position="135"/>
    </location>
</feature>
<feature type="strand" evidence="12">
    <location>
        <begin position="139"/>
        <end position="143"/>
    </location>
</feature>
<feature type="helix" evidence="12">
    <location>
        <begin position="146"/>
        <end position="148"/>
    </location>
</feature>
<feature type="strand" evidence="12">
    <location>
        <begin position="152"/>
        <end position="158"/>
    </location>
</feature>
<feature type="strand" evidence="12">
    <location>
        <begin position="162"/>
        <end position="173"/>
    </location>
</feature>
<feature type="strand" evidence="12">
    <location>
        <begin position="176"/>
        <end position="186"/>
    </location>
</feature>
<feature type="strand" evidence="12">
    <location>
        <begin position="191"/>
        <end position="194"/>
    </location>
</feature>
<feature type="strand" evidence="12">
    <location>
        <begin position="197"/>
        <end position="205"/>
    </location>
</feature>
<feature type="strand" evidence="12">
    <location>
        <begin position="210"/>
        <end position="220"/>
    </location>
</feature>
<feature type="strand" evidence="12">
    <location>
        <begin position="227"/>
        <end position="232"/>
    </location>
</feature>
<feature type="strand" evidence="12">
    <location>
        <begin position="246"/>
        <end position="249"/>
    </location>
</feature>
<feature type="strand" evidence="12">
    <location>
        <begin position="261"/>
        <end position="267"/>
    </location>
</feature>
<feature type="turn" evidence="12">
    <location>
        <begin position="268"/>
        <end position="271"/>
    </location>
</feature>
<feature type="strand" evidence="12">
    <location>
        <begin position="272"/>
        <end position="277"/>
    </location>
</feature>
<feature type="strand" evidence="12">
    <location>
        <begin position="280"/>
        <end position="286"/>
    </location>
</feature>
<feature type="turn" evidence="12">
    <location>
        <begin position="287"/>
        <end position="289"/>
    </location>
</feature>
<feature type="strand" evidence="12">
    <location>
        <begin position="292"/>
        <end position="297"/>
    </location>
</feature>
<feature type="strand" evidence="12">
    <location>
        <begin position="303"/>
        <end position="309"/>
    </location>
</feature>
<feature type="turn" evidence="12">
    <location>
        <begin position="310"/>
        <end position="313"/>
    </location>
</feature>
<feature type="strand" evidence="12">
    <location>
        <begin position="314"/>
        <end position="319"/>
    </location>
</feature>
<feature type="turn" evidence="14">
    <location>
        <begin position="320"/>
        <end position="322"/>
    </location>
</feature>
<feature type="strand" evidence="12">
    <location>
        <begin position="323"/>
        <end position="329"/>
    </location>
</feature>
<feature type="turn" evidence="12">
    <location>
        <begin position="331"/>
        <end position="333"/>
    </location>
</feature>
<feature type="helix" evidence="12">
    <location>
        <begin position="334"/>
        <end position="340"/>
    </location>
</feature>
<feature type="helix" evidence="12">
    <location>
        <begin position="345"/>
        <end position="354"/>
    </location>
</feature>
<feature type="helix" evidence="12">
    <location>
        <begin position="361"/>
        <end position="373"/>
    </location>
</feature>
<feature type="helix" evidence="12">
    <location>
        <begin position="377"/>
        <end position="386"/>
    </location>
</feature>
<feature type="helix" evidence="12">
    <location>
        <begin position="388"/>
        <end position="390"/>
    </location>
</feature>
<feature type="helix" evidence="12">
    <location>
        <begin position="395"/>
        <end position="401"/>
    </location>
</feature>
<feature type="helix" evidence="12">
    <location>
        <begin position="413"/>
        <end position="424"/>
    </location>
</feature>
<feature type="helix" evidence="12">
    <location>
        <begin position="429"/>
        <end position="441"/>
    </location>
</feature>
<feature type="helix" evidence="12">
    <location>
        <begin position="445"/>
        <end position="454"/>
    </location>
</feature>
<feature type="helix" evidence="12">
    <location>
        <begin position="461"/>
        <end position="470"/>
    </location>
</feature>
<feature type="helix" evidence="12">
    <location>
        <begin position="473"/>
        <end position="482"/>
    </location>
</feature>
<proteinExistence type="evidence at protein level"/>
<dbReference type="EMBL" id="J03583">
    <property type="protein sequence ID" value="AAA40874.1"/>
    <property type="molecule type" value="mRNA"/>
</dbReference>
<dbReference type="PIR" id="A39941">
    <property type="entry name" value="LRRTH"/>
</dbReference>
<dbReference type="RefSeq" id="NP_062172.1">
    <property type="nucleotide sequence ID" value="NM_019299.1"/>
</dbReference>
<dbReference type="PDB" id="1BPO">
    <property type="method" value="X-ray"/>
    <property type="resolution" value="2.60 A"/>
    <property type="chains" value="A/B/C=1-494"/>
</dbReference>
<dbReference type="PDB" id="1C9I">
    <property type="method" value="X-ray"/>
    <property type="resolution" value="2.90 A"/>
    <property type="chains" value="A/B=1-359"/>
</dbReference>
<dbReference type="PDB" id="1C9L">
    <property type="method" value="X-ray"/>
    <property type="resolution" value="2.90 A"/>
    <property type="chains" value="A/B=3-359"/>
</dbReference>
<dbReference type="PDBsum" id="1BPO"/>
<dbReference type="PDBsum" id="1C9I"/>
<dbReference type="PDBsum" id="1C9L"/>
<dbReference type="EMDB" id="EMD-3442"/>
<dbReference type="SMR" id="P11442"/>
<dbReference type="BioGRID" id="248464">
    <property type="interactions" value="22"/>
</dbReference>
<dbReference type="CORUM" id="P11442"/>
<dbReference type="DIP" id="DIP-36966N"/>
<dbReference type="FunCoup" id="P11442">
    <property type="interactions" value="4243"/>
</dbReference>
<dbReference type="IntAct" id="P11442">
    <property type="interactions" value="9"/>
</dbReference>
<dbReference type="MINT" id="P11442"/>
<dbReference type="STRING" id="10116.ENSRNOP00000005987"/>
<dbReference type="GlyGen" id="P11442">
    <property type="glycosylation" value="1 site, 1 O-linked glycan (1 site)"/>
</dbReference>
<dbReference type="iPTMnet" id="P11442"/>
<dbReference type="PhosphoSitePlus" id="P11442"/>
<dbReference type="SwissPalm" id="P11442"/>
<dbReference type="jPOST" id="P11442"/>
<dbReference type="PaxDb" id="10116-ENSRNOP00000005987"/>
<dbReference type="GeneID" id="54241"/>
<dbReference type="KEGG" id="rno:54241"/>
<dbReference type="AGR" id="RGD:2364"/>
<dbReference type="CTD" id="1213"/>
<dbReference type="RGD" id="2364">
    <property type="gene designation" value="Cltc"/>
</dbReference>
<dbReference type="eggNOG" id="KOG0985">
    <property type="taxonomic scope" value="Eukaryota"/>
</dbReference>
<dbReference type="InParanoid" id="P11442"/>
<dbReference type="PhylomeDB" id="P11442"/>
<dbReference type="Reactome" id="R-RNO-177504">
    <property type="pathway name" value="Retrograde neurotrophin signalling"/>
</dbReference>
<dbReference type="Reactome" id="R-RNO-190873">
    <property type="pathway name" value="Gap junction degradation"/>
</dbReference>
<dbReference type="Reactome" id="R-RNO-196025">
    <property type="pathway name" value="Formation of annular gap junctions"/>
</dbReference>
<dbReference type="Reactome" id="R-RNO-2132295">
    <property type="pathway name" value="MHC class II antigen presentation"/>
</dbReference>
<dbReference type="Reactome" id="R-RNO-432720">
    <property type="pathway name" value="Lysosome Vesicle Biogenesis"/>
</dbReference>
<dbReference type="Reactome" id="R-RNO-432722">
    <property type="pathway name" value="Golgi Associated Vesicle Biogenesis"/>
</dbReference>
<dbReference type="Reactome" id="R-RNO-437239">
    <property type="pathway name" value="Recycling pathway of L1"/>
</dbReference>
<dbReference type="Reactome" id="R-RNO-5099900">
    <property type="pathway name" value="WNT5A-dependent internalization of FZD4"/>
</dbReference>
<dbReference type="Reactome" id="R-RNO-5140745">
    <property type="pathway name" value="WNT5A-dependent internalization of FZD2, FZD5 and ROR2"/>
</dbReference>
<dbReference type="Reactome" id="R-RNO-8856825">
    <property type="pathway name" value="Cargo recognition for clathrin-mediated endocytosis"/>
</dbReference>
<dbReference type="Reactome" id="R-RNO-8856828">
    <property type="pathway name" value="Clathrin-mediated endocytosis"/>
</dbReference>
<dbReference type="Reactome" id="R-RNO-8866427">
    <property type="pathway name" value="VLDLR internalisation and degradation"/>
</dbReference>
<dbReference type="Reactome" id="R-RNO-8964038">
    <property type="pathway name" value="LDL clearance"/>
</dbReference>
<dbReference type="Reactome" id="R-RNO-9013420">
    <property type="pathway name" value="RHOU GTPase cycle"/>
</dbReference>
<dbReference type="Reactome" id="R-RNO-9013424">
    <property type="pathway name" value="RHOV GTPase cycle"/>
</dbReference>
<dbReference type="EvolutionaryTrace" id="P11442"/>
<dbReference type="PRO" id="PR:P11442"/>
<dbReference type="Proteomes" id="UP000002494">
    <property type="component" value="Unplaced"/>
</dbReference>
<dbReference type="GO" id="GO:0030118">
    <property type="term" value="C:clathrin coat"/>
    <property type="evidence" value="ECO:0000314"/>
    <property type="project" value="RGD"/>
</dbReference>
<dbReference type="GO" id="GO:0030132">
    <property type="term" value="C:clathrin coat of coated pit"/>
    <property type="evidence" value="ECO:0007669"/>
    <property type="project" value="InterPro"/>
</dbReference>
<dbReference type="GO" id="GO:0030130">
    <property type="term" value="C:clathrin coat of trans-Golgi network vesicle"/>
    <property type="evidence" value="ECO:0007669"/>
    <property type="project" value="InterPro"/>
</dbReference>
<dbReference type="GO" id="GO:0071439">
    <property type="term" value="C:clathrin complex"/>
    <property type="evidence" value="ECO:0000266"/>
    <property type="project" value="RGD"/>
</dbReference>
<dbReference type="GO" id="GO:0045334">
    <property type="term" value="C:clathrin-coated endocytic vesicle"/>
    <property type="evidence" value="ECO:0000318"/>
    <property type="project" value="GO_Central"/>
</dbReference>
<dbReference type="GO" id="GO:0030669">
    <property type="term" value="C:clathrin-coated endocytic vesicle membrane"/>
    <property type="evidence" value="ECO:0000304"/>
    <property type="project" value="Reactome"/>
</dbReference>
<dbReference type="GO" id="GO:0005905">
    <property type="term" value="C:clathrin-coated pit"/>
    <property type="evidence" value="ECO:0000266"/>
    <property type="project" value="RGD"/>
</dbReference>
<dbReference type="GO" id="GO:0030136">
    <property type="term" value="C:clathrin-coated vesicle"/>
    <property type="evidence" value="ECO:0000266"/>
    <property type="project" value="RGD"/>
</dbReference>
<dbReference type="GO" id="GO:0005829">
    <property type="term" value="C:cytosol"/>
    <property type="evidence" value="ECO:0000266"/>
    <property type="project" value="RGD"/>
</dbReference>
<dbReference type="GO" id="GO:0098850">
    <property type="term" value="C:extrinsic component of synaptic vesicle membrane"/>
    <property type="evidence" value="ECO:0000314"/>
    <property type="project" value="SynGO"/>
</dbReference>
<dbReference type="GO" id="GO:0098978">
    <property type="term" value="C:glutamatergic synapse"/>
    <property type="evidence" value="ECO:0000266"/>
    <property type="project" value="RGD"/>
</dbReference>
<dbReference type="GO" id="GO:0042470">
    <property type="term" value="C:melanosome"/>
    <property type="evidence" value="ECO:0007669"/>
    <property type="project" value="UniProtKB-SubCell"/>
</dbReference>
<dbReference type="GO" id="GO:0016020">
    <property type="term" value="C:membrane"/>
    <property type="evidence" value="ECO:0000266"/>
    <property type="project" value="RGD"/>
</dbReference>
<dbReference type="GO" id="GO:0030117">
    <property type="term" value="C:membrane coat"/>
    <property type="evidence" value="ECO:0000266"/>
    <property type="project" value="RGD"/>
</dbReference>
<dbReference type="GO" id="GO:1990498">
    <property type="term" value="C:mitotic spindle microtubule"/>
    <property type="evidence" value="ECO:0000266"/>
    <property type="project" value="RGD"/>
</dbReference>
<dbReference type="GO" id="GO:0031523">
    <property type="term" value="C:Myb complex"/>
    <property type="evidence" value="ECO:0000266"/>
    <property type="project" value="RGD"/>
</dbReference>
<dbReference type="GO" id="GO:0098684">
    <property type="term" value="C:photoreceptor ribbon synapse"/>
    <property type="evidence" value="ECO:0000266"/>
    <property type="project" value="RGD"/>
</dbReference>
<dbReference type="GO" id="GO:0098843">
    <property type="term" value="C:postsynaptic endocytic zone"/>
    <property type="evidence" value="ECO:0000266"/>
    <property type="project" value="RGD"/>
</dbReference>
<dbReference type="GO" id="GO:0098835">
    <property type="term" value="C:presynaptic endocytic zone membrane"/>
    <property type="evidence" value="ECO:0000266"/>
    <property type="project" value="RGD"/>
</dbReference>
<dbReference type="GO" id="GO:0032991">
    <property type="term" value="C:protein-containing complex"/>
    <property type="evidence" value="ECO:0000266"/>
    <property type="project" value="RGD"/>
</dbReference>
<dbReference type="GO" id="GO:0042383">
    <property type="term" value="C:sarcolemma"/>
    <property type="evidence" value="ECO:0000314"/>
    <property type="project" value="RGD"/>
</dbReference>
<dbReference type="GO" id="GO:0005819">
    <property type="term" value="C:spindle"/>
    <property type="evidence" value="ECO:0000314"/>
    <property type="project" value="UniProtKB"/>
</dbReference>
<dbReference type="GO" id="GO:0030315">
    <property type="term" value="C:T-tubule"/>
    <property type="evidence" value="ECO:0000314"/>
    <property type="project" value="RGD"/>
</dbReference>
<dbReference type="GO" id="GO:0043195">
    <property type="term" value="C:terminal bouton"/>
    <property type="evidence" value="ECO:0007005"/>
    <property type="project" value="ParkinsonsUK-UCL"/>
</dbReference>
<dbReference type="GO" id="GO:0030506">
    <property type="term" value="F:ankyrin binding"/>
    <property type="evidence" value="ECO:0000314"/>
    <property type="project" value="RGD"/>
</dbReference>
<dbReference type="GO" id="GO:0032051">
    <property type="term" value="F:clathrin light chain binding"/>
    <property type="evidence" value="ECO:0000266"/>
    <property type="project" value="RGD"/>
</dbReference>
<dbReference type="GO" id="GO:0097718">
    <property type="term" value="F:disordered domain specific binding"/>
    <property type="evidence" value="ECO:0000266"/>
    <property type="project" value="RGD"/>
</dbReference>
<dbReference type="GO" id="GO:0003725">
    <property type="term" value="F:double-stranded RNA binding"/>
    <property type="evidence" value="ECO:0000266"/>
    <property type="project" value="RGD"/>
</dbReference>
<dbReference type="GO" id="GO:0031072">
    <property type="term" value="F:heat shock protein binding"/>
    <property type="evidence" value="ECO:0000314"/>
    <property type="project" value="RGD"/>
</dbReference>
<dbReference type="GO" id="GO:0050750">
    <property type="term" value="F:low-density lipoprotein particle receptor binding"/>
    <property type="evidence" value="ECO:0000266"/>
    <property type="project" value="RGD"/>
</dbReference>
<dbReference type="GO" id="GO:0042277">
    <property type="term" value="F:peptide binding"/>
    <property type="evidence" value="ECO:0000314"/>
    <property type="project" value="RGD"/>
</dbReference>
<dbReference type="GO" id="GO:0019901">
    <property type="term" value="F:protein kinase binding"/>
    <property type="evidence" value="ECO:0000266"/>
    <property type="project" value="RGD"/>
</dbReference>
<dbReference type="GO" id="GO:0120283">
    <property type="term" value="F:protein serine/threonine kinase binding"/>
    <property type="evidence" value="ECO:0000353"/>
    <property type="project" value="RGD"/>
</dbReference>
<dbReference type="GO" id="GO:0005198">
    <property type="term" value="F:structural molecule activity"/>
    <property type="evidence" value="ECO:0007669"/>
    <property type="project" value="InterPro"/>
</dbReference>
<dbReference type="GO" id="GO:1990381">
    <property type="term" value="F:ubiquitin-specific protease binding"/>
    <property type="evidence" value="ECO:0000266"/>
    <property type="project" value="RGD"/>
</dbReference>
<dbReference type="GO" id="GO:0150093">
    <property type="term" value="P:amyloid-beta clearance by transcytosis"/>
    <property type="evidence" value="ECO:0000266"/>
    <property type="project" value="RGD"/>
</dbReference>
<dbReference type="GO" id="GO:0006914">
    <property type="term" value="P:autophagy"/>
    <property type="evidence" value="ECO:0007669"/>
    <property type="project" value="UniProtKB-KW"/>
</dbReference>
<dbReference type="GO" id="GO:0048268">
    <property type="term" value="P:clathrin coat assembly"/>
    <property type="evidence" value="ECO:0000266"/>
    <property type="project" value="RGD"/>
</dbReference>
<dbReference type="GO" id="GO:0072318">
    <property type="term" value="P:clathrin coat disassembly"/>
    <property type="evidence" value="ECO:0000250"/>
    <property type="project" value="UniProtKB"/>
</dbReference>
<dbReference type="GO" id="GO:0072583">
    <property type="term" value="P:clathrin-dependent endocytosis"/>
    <property type="evidence" value="ECO:0000266"/>
    <property type="project" value="RGD"/>
</dbReference>
<dbReference type="GO" id="GO:0007030">
    <property type="term" value="P:Golgi organization"/>
    <property type="evidence" value="ECO:0000315"/>
    <property type="project" value="RGD"/>
</dbReference>
<dbReference type="GO" id="GO:0006886">
    <property type="term" value="P:intracellular protein transport"/>
    <property type="evidence" value="ECO:0007669"/>
    <property type="project" value="InterPro"/>
</dbReference>
<dbReference type="GO" id="GO:0000278">
    <property type="term" value="P:mitotic cell cycle"/>
    <property type="evidence" value="ECO:0000315"/>
    <property type="project" value="UniProtKB"/>
</dbReference>
<dbReference type="GO" id="GO:0090307">
    <property type="term" value="P:mitotic spindle assembly"/>
    <property type="evidence" value="ECO:0000266"/>
    <property type="project" value="RGD"/>
</dbReference>
<dbReference type="GO" id="GO:1900126">
    <property type="term" value="P:negative regulation of hyaluronan biosynthetic process"/>
    <property type="evidence" value="ECO:0000250"/>
    <property type="project" value="UniProtKB"/>
</dbReference>
<dbReference type="GO" id="GO:1903077">
    <property type="term" value="P:negative regulation of protein localization to plasma membrane"/>
    <property type="evidence" value="ECO:0000266"/>
    <property type="project" value="RGD"/>
</dbReference>
<dbReference type="GO" id="GO:0031623">
    <property type="term" value="P:receptor internalization"/>
    <property type="evidence" value="ECO:0000266"/>
    <property type="project" value="RGD"/>
</dbReference>
<dbReference type="GO" id="GO:0006898">
    <property type="term" value="P:receptor-mediated endocytosis"/>
    <property type="evidence" value="ECO:0000315"/>
    <property type="project" value="UniProtKB"/>
</dbReference>
<dbReference type="GO" id="GO:0060236">
    <property type="term" value="P:regulation of mitotic spindle organization"/>
    <property type="evidence" value="ECO:0000266"/>
    <property type="project" value="RGD"/>
</dbReference>
<dbReference type="GO" id="GO:0042147">
    <property type="term" value="P:retrograde transport, endosome to Golgi"/>
    <property type="evidence" value="ECO:0000266"/>
    <property type="project" value="RGD"/>
</dbReference>
<dbReference type="GO" id="GO:0048488">
    <property type="term" value="P:synaptic vesicle endocytosis"/>
    <property type="evidence" value="ECO:0000314"/>
    <property type="project" value="SynGO"/>
</dbReference>
<dbReference type="GO" id="GO:0033572">
    <property type="term" value="P:transferrin transport"/>
    <property type="evidence" value="ECO:0000266"/>
    <property type="project" value="RGD"/>
</dbReference>
<dbReference type="FunFam" id="1.25.40.10:FF:000001">
    <property type="entry name" value="Clathrin heavy chain"/>
    <property type="match status" value="1"/>
</dbReference>
<dbReference type="FunFam" id="1.25.40.10:FF:000002">
    <property type="entry name" value="Clathrin heavy chain"/>
    <property type="match status" value="1"/>
</dbReference>
<dbReference type="FunFam" id="1.25.40.10:FF:000007">
    <property type="entry name" value="Clathrin heavy chain"/>
    <property type="match status" value="1"/>
</dbReference>
<dbReference type="FunFam" id="1.25.40.10:FF:000095">
    <property type="entry name" value="Clathrin heavy chain"/>
    <property type="match status" value="1"/>
</dbReference>
<dbReference type="FunFam" id="1.25.40.730:FF:000001">
    <property type="entry name" value="Clathrin heavy chain"/>
    <property type="match status" value="1"/>
</dbReference>
<dbReference type="FunFam" id="2.130.10.110:FF:000001">
    <property type="entry name" value="Clathrin heavy chain"/>
    <property type="match status" value="1"/>
</dbReference>
<dbReference type="Gene3D" id="1.25.40.730">
    <property type="match status" value="1"/>
</dbReference>
<dbReference type="Gene3D" id="2.130.10.110">
    <property type="entry name" value="Clathrin heavy-chain terminal domain"/>
    <property type="match status" value="1"/>
</dbReference>
<dbReference type="Gene3D" id="1.25.40.10">
    <property type="entry name" value="Tetratricopeptide repeat domain"/>
    <property type="match status" value="4"/>
</dbReference>
<dbReference type="InterPro" id="IPR016024">
    <property type="entry name" value="ARM-type_fold"/>
</dbReference>
<dbReference type="InterPro" id="IPR055358">
    <property type="entry name" value="CHCR"/>
</dbReference>
<dbReference type="InterPro" id="IPR000547">
    <property type="entry name" value="Clathrin_H-chain/VPS_repeat"/>
</dbReference>
<dbReference type="InterPro" id="IPR015348">
    <property type="entry name" value="Clathrin_H-chain_linker_core"/>
</dbReference>
<dbReference type="InterPro" id="IPR016025">
    <property type="entry name" value="Clathrin_H-chain_N"/>
</dbReference>
<dbReference type="InterPro" id="IPR022365">
    <property type="entry name" value="Clathrin_H-chain_propeller_rpt"/>
</dbReference>
<dbReference type="InterPro" id="IPR016341">
    <property type="entry name" value="Clathrin_heavy_chain"/>
</dbReference>
<dbReference type="InterPro" id="IPR011990">
    <property type="entry name" value="TPR-like_helical_dom_sf"/>
</dbReference>
<dbReference type="PANTHER" id="PTHR10292:SF7">
    <property type="entry name" value="CLATHRIN HEAVY CHAIN 1"/>
    <property type="match status" value="1"/>
</dbReference>
<dbReference type="PANTHER" id="PTHR10292">
    <property type="entry name" value="CLATHRIN HEAVY CHAIN RELATED"/>
    <property type="match status" value="1"/>
</dbReference>
<dbReference type="Pfam" id="PF00637">
    <property type="entry name" value="Clathrin"/>
    <property type="match status" value="7"/>
</dbReference>
<dbReference type="Pfam" id="PF09268">
    <property type="entry name" value="Clathrin-link"/>
    <property type="match status" value="1"/>
</dbReference>
<dbReference type="Pfam" id="PF13838">
    <property type="entry name" value="Clathrin_H_link"/>
    <property type="match status" value="1"/>
</dbReference>
<dbReference type="Pfam" id="PF01394">
    <property type="entry name" value="Clathrin_propel"/>
    <property type="match status" value="5"/>
</dbReference>
<dbReference type="PIRSF" id="PIRSF002290">
    <property type="entry name" value="Clathrin_H_chain"/>
    <property type="match status" value="1"/>
</dbReference>
<dbReference type="SMART" id="SM00299">
    <property type="entry name" value="CLH"/>
    <property type="match status" value="7"/>
</dbReference>
<dbReference type="SUPFAM" id="SSF48371">
    <property type="entry name" value="ARM repeat"/>
    <property type="match status" value="6"/>
</dbReference>
<dbReference type="SUPFAM" id="SSF50989">
    <property type="entry name" value="Clathrin heavy-chain terminal domain"/>
    <property type="match status" value="1"/>
</dbReference>
<dbReference type="PROSITE" id="PS50236">
    <property type="entry name" value="CHCR"/>
    <property type="match status" value="7"/>
</dbReference>
<organism>
    <name type="scientific">Rattus norvegicus</name>
    <name type="common">Rat</name>
    <dbReference type="NCBI Taxonomy" id="10116"/>
    <lineage>
        <taxon>Eukaryota</taxon>
        <taxon>Metazoa</taxon>
        <taxon>Chordata</taxon>
        <taxon>Craniata</taxon>
        <taxon>Vertebrata</taxon>
        <taxon>Euteleostomi</taxon>
        <taxon>Mammalia</taxon>
        <taxon>Eutheria</taxon>
        <taxon>Euarchontoglires</taxon>
        <taxon>Glires</taxon>
        <taxon>Rodentia</taxon>
        <taxon>Myomorpha</taxon>
        <taxon>Muroidea</taxon>
        <taxon>Muridae</taxon>
        <taxon>Murinae</taxon>
        <taxon>Rattus</taxon>
    </lineage>
</organism>
<gene>
    <name evidence="10" type="primary">Cltc</name>
</gene>
<protein>
    <recommendedName>
        <fullName evidence="3">Clathrin heavy chain 1</fullName>
    </recommendedName>
</protein>
<comment type="function">
    <text evidence="2 3 6 7">Clathrin is the major protein of the polyhedral coat of coated pits and vesicles. Two different adapter protein complexes link the clathrin lattice either to the plasma membrane or to the trans-Golgi network (By similarity). Acts as a component of the TACC3/ch-TOG/clathrin complex proposed to contribute to stabilization of kinetochore fibers of the mitotic spindle by acting as inter-microtubule bridge (PubMed:15858577, PubMed:16968737). The TACC3/ch-TOG/clathrin complex is required for the maintenance of kinetochore fiber tension (By similarity). Plays a role in early autophagosome formation (By similarity). Interaction with DNAJC6 mediates the recruitment of HSPA8 to the clathrin lattice and creates local destabilization of the lattice promoting uncoating (By similarity).</text>
</comment>
<comment type="subunit">
    <text evidence="2 3 4 7">Clathrin triskelions, composed of 3 heavy chains and 3 light chains, are the basic subunits of the clathrin coat (PubMed:16968737). In the presence of light chains, hub assembly is influenced by both the pH and the concentration of calcium (By similarity). Interacts with HIP1 (By similarity). Interacts with DENND1A, DENND1B and DENND1C (By similarity). Interacts with OCRL (By similarity). Interacts with ERBB2 (By similarity). Interacts with FKBP6 (By similarity). Interacts with CKAP5 and TACC3 forming the TACC3/ch-TOG/clathrin complex located at spindle inter-microtubules bridges; the complex implicates clathrin triskelions; TACC3 and CLTC are proposed to form a composite microtubule interaction surface (By similarity). Interacts with ATG16L1 (via N-terminus) (By similarity). Interacts with RFTN1; the interaction occurs in response to pathogens (By similarity). Interacts with USP2 isoform 2 (By similarity). Interacts with TMEM106B (via N-terminus) (By similarity). Interacts with DNAJC6; this interaction produces a local change in heavy-chain contacts, creating a detectable global distortion of the clathrin coat and leads to the recruitment of HSPA8 (By similarity).</text>
</comment>
<comment type="interaction">
    <interactant intactId="EBI-397997">
        <id>P11442</id>
    </interactant>
    <interactant intactId="EBI-6148898">
        <id>Q01968</id>
        <label>OCRL</label>
    </interactant>
    <organismsDiffer>true</organismsDiffer>
    <experiments>5</experiments>
</comment>
<comment type="subcellular location">
    <subcellularLocation>
        <location>Cytoplasmic vesicle membrane</location>
        <topology>Peripheral membrane protein</topology>
        <orientation>Cytoplasmic side</orientation>
    </subcellularLocation>
    <subcellularLocation>
        <location>Membrane</location>
        <location>Coated pit</location>
        <topology>Peripheral membrane protein</topology>
        <orientation>Cytoplasmic side</orientation>
    </subcellularLocation>
    <subcellularLocation>
        <location evidence="1">Melanosome</location>
    </subcellularLocation>
    <subcellularLocation>
        <location evidence="6">Cytoplasm</location>
        <location evidence="6">Cytoskeleton</location>
        <location evidence="6">Spindle</location>
    </subcellularLocation>
    <text evidence="3">Cytoplasmic face of coated pits and vesicles. In complex with TACC3 and CKAP5 (forming the TACC3/ch-TOG/clathrin complex) localized to inter-microtubule bridges in mitotic spindles.</text>
</comment>
<comment type="domain">
    <text>The N-terminal seven-bladed beta-propeller is formed by WD40-like repeats, and projects inward from the polyhedral outer clathrin coat. It constitutes a major protein-protein interaction node.</text>
</comment>
<comment type="similarity">
    <text evidence="9">Belongs to the clathrin heavy chain family.</text>
</comment>
<accession>P11442</accession>
<keyword id="KW-0002">3D-structure</keyword>
<keyword id="KW-0007">Acetylation</keyword>
<keyword id="KW-0072">Autophagy</keyword>
<keyword id="KW-0168">Coated pit</keyword>
<keyword id="KW-0963">Cytoplasm</keyword>
<keyword id="KW-0968">Cytoplasmic vesicle</keyword>
<keyword id="KW-0206">Cytoskeleton</keyword>
<keyword id="KW-0903">Direct protein sequencing</keyword>
<keyword id="KW-0472">Membrane</keyword>
<keyword id="KW-0597">Phosphoprotein</keyword>
<keyword id="KW-1185">Reference proteome</keyword>
<keyword id="KW-0677">Repeat</keyword>
<evidence type="ECO:0000250" key="1"/>
<evidence type="ECO:0000250" key="2">
    <source>
        <dbReference type="UniProtKB" id="P49951"/>
    </source>
</evidence>
<evidence type="ECO:0000250" key="3">
    <source>
        <dbReference type="UniProtKB" id="Q00610"/>
    </source>
</evidence>
<evidence type="ECO:0000250" key="4">
    <source>
        <dbReference type="UniProtKB" id="Q68FD5"/>
    </source>
</evidence>
<evidence type="ECO:0000255" key="5"/>
<evidence type="ECO:0000269" key="6">
    <source>
    </source>
</evidence>
<evidence type="ECO:0000269" key="7">
    <source>
    </source>
</evidence>
<evidence type="ECO:0000269" key="8">
    <source ref="2"/>
</evidence>
<evidence type="ECO:0000305" key="9"/>
<evidence type="ECO:0000312" key="10">
    <source>
        <dbReference type="RGD" id="2364"/>
    </source>
</evidence>
<evidence type="ECO:0007744" key="11">
    <source>
    </source>
</evidence>
<evidence type="ECO:0007829" key="12">
    <source>
        <dbReference type="PDB" id="1BPO"/>
    </source>
</evidence>
<evidence type="ECO:0007829" key="13">
    <source>
        <dbReference type="PDB" id="1C9I"/>
    </source>
</evidence>
<evidence type="ECO:0007829" key="14">
    <source>
        <dbReference type="PDB" id="1C9L"/>
    </source>
</evidence>
<name>CLH1_RAT</name>
<sequence length="1675" mass="191599">MAQILPIRFQEHLQLQNLGINPANIGFSTLTMESDKFICIREKVGEQAQVVIIDMNDPSNPIRRPISADSAIMNPASKVIALKAGKTLQIFNIEMKSKMKAHTMTDDVTFWKWISLNTVALVTDNAVYHWSMEGESQPVKMFDRHSSLAGCQIINYRTDAKQKWLLLTGISAQQNRVVGAMQLYSVDRKVSQPIEGHAASFAQFKMEGNAEESTLFCFAVRGQAGGKLHIIEVGTPPTGNQPFPKKAVDVFFPPEAQNDFPVAMQISEKHDVVFLITKYGYIHLYDLETGTCIYMNRISGETIFVTAPHEATAGIIGVNRKGQVLSVCVEEENIIPYITNVLQNPDLALRMAVRNNLAGAEELFARKFNALFAQGNYSEAAKVAANAPKGILRTPDTIRRFQSVPAQPGQTSPLLQYFGILLDQGQLNKYESLELCRPVLQQGRKQLLEKWLKEDKLECSEELGDLVKSVDPTLALSVYLRANVPNKVIQCFAETGQVQKIVLYAKKVGYTPDWIFLLRNVMRISPDQGQQFAQMLVQDEEPLADITQIVDVFMEYNLIQQCTAFLLDALKNNRPSEGPLQTRLLEMNLMHAPQVADAILGNQMFTHYDRAHIAQLCEKAGLLQRALEHFTDLYDIKRAVVHTHLLNPEWLVNYFGSLSVEDSLECLRAMLSANIRQNLQIWVQVASKYHEQLSTQSLIELFESFKSFEGLFYFLGSIVNFSQDPDVHFKYIQAACKTGQIKEVERICRESNCYDPERVKNFLKEAKLTDQLPLIIVCDRFDFVHDLVLYLYRNSLQKYIEIYVQKVNPSRLPVVIGGLLDVDCSEDVIKNLILVVRGQFSTDELVAEVEKRNRLKLLLPWLEARIHEGCEEPATHNALAKIYIDSNNNPERFLRENPYYDSRVVGKYCEKRDPHLACVAYERGQCDLELINVCNENSLFKSLSRYLVRRKDPELWGSVLLESNPYRRPLIDQVVQTALSETQDPEEVSVTVKAFMTADLPNELIELLEKIVLDNSVFSEHRNLQNLLILTAIKADRTRVMEYINRLDNYDAPDIANIAISNELFEEAFAIFRKFDVNTSAVQVLIEHIGNLDRAYEFAERCNEPAVWSQLAKAQLQKGMVKEAIDSYIKADDPSSYMEVVQAANTSGNWEELVKYLQMARKKARESYVETELIFALAKTNRLAELEEFINGPNNAHIQQVGDRCYDEKMYDAAKLLYNNVSNFGRLASTLVHLGEYQAAVDGARKANSTRTWKEVCFACVDGKEFRLAQMCGLHIVVHADELEELINYYQDRGYFEELITMLEAALGLERAHMGMFTELAILYSKFKPQKMREHLELFWSRVNIPKVLRAAEQAHLWAELVFLYDKYEEYDNAIITMMNHPTDAWKEGQFKDIITKVANVELYYKAIQFYLEFKPLLLNDLLMVLSPRLAHTRAVNYFSKVKQLPLVKPYLRSVQNHNNKSVNESLNNLFITEEDYQALRTSIDAYDNFDNISLAQRLEKHELIEFRRIAAYLFKGNNRWKQSVELCKKDSLYKDAMQYASESKDTELAEELLQWFLQEEKRECFGACLFTCYDLLRPDVVLETAWRHNIMDFAMPYFIQVMKEYLTKVDKLDASESLRKEEEQATETQPIVYGQPQLMLTAGPSVAVPPQAPFGYGYTAPPYGQPQPGFGYSM</sequence>
<reference key="1">
    <citation type="journal article" date="1987" name="Proc. Natl. Acad. Sci. U.S.A.">
        <title>Clathrin heavy chain: molecular cloning and complete primary structure.</title>
        <authorList>
            <person name="Kirchhausen T."/>
            <person name="Harrison S.C."/>
            <person name="Chow E.P."/>
            <person name="Mattaliano R.J."/>
            <person name="Ramachandran K.L."/>
            <person name="Smart J."/>
            <person name="Brosius J."/>
        </authorList>
    </citation>
    <scope>NUCLEOTIDE SEQUENCE [MRNA]</scope>
</reference>
<reference key="2">
    <citation type="submission" date="2006-08" db="UniProtKB">
        <authorList>
            <person name="Bienvenut W.V."/>
            <person name="von Kriegsheim A.F."/>
            <person name="Kolch W."/>
        </authorList>
    </citation>
    <scope>PROTEIN SEQUENCE OF 2-8; 87-96; 177-205; 270-278; 355-382; 838-851; 882-892; 896-903; 1011-1034; 1095-1101; 1123-1130; 1216-1226; 1398-1406; 1435-1441; 1444-1453; 1502-1508; 1536-1545 AND 1610-1620</scope>
    <scope>CLEAVAGE OF INITIATOR METHIONINE</scope>
    <scope>ACETYLATION AT ALA-2</scope>
    <scope>IDENTIFICATION BY MASS SPECTROMETRY</scope>
    <source>
        <tissue>Pheochromocytoma</tissue>
    </source>
</reference>
<reference key="3">
    <citation type="journal article" date="2005" name="Nature">
        <title>Clathrin is required for the function of the mitotic spindle.</title>
        <authorList>
            <person name="Royle S.J."/>
            <person name="Bright N.A."/>
            <person name="Lagnado L."/>
        </authorList>
    </citation>
    <scope>FUNCTION</scope>
    <scope>SUBCELLULAR LOCATION</scope>
</reference>
<reference key="4">
    <citation type="journal article" date="2006" name="J. Cell Sci.">
        <title>Trimerisation is important for the function of clathrin at the mitotic spindle.</title>
        <authorList>
            <person name="Royle S.J."/>
            <person name="Lagnado L."/>
        </authorList>
    </citation>
    <scope>FUNCTION</scope>
    <scope>SUBUNIT</scope>
</reference>
<reference key="5">
    <citation type="journal article" date="2012" name="Nat. Commun.">
        <title>Quantitative maps of protein phosphorylation sites across 14 different rat organs and tissues.</title>
        <authorList>
            <person name="Lundby A."/>
            <person name="Secher A."/>
            <person name="Lage K."/>
            <person name="Nordsborg N.B."/>
            <person name="Dmytriyev A."/>
            <person name="Lundby C."/>
            <person name="Olsen J.V."/>
        </authorList>
    </citation>
    <scope>PHOSPHORYLATION [LARGE SCALE ANALYSIS] AT THR-105; THR-394 AND SER-1494</scope>
    <scope>IDENTIFICATION BY MASS SPECTROMETRY [LARGE SCALE ANALYSIS]</scope>
</reference>
<reference key="6">
    <citation type="journal article" date="1998" name="Cell">
        <title>Atomic structure of clathrin: a beta propeller terminal domain joins an alpha zigzag linker.</title>
        <authorList>
            <person name="Ter Haar E."/>
            <person name="Musacchio A."/>
            <person name="Harrison S.C."/>
            <person name="Kirchhausen T."/>
        </authorList>
    </citation>
    <scope>X-RAY CRYSTALLOGRAPHY (2.6 ANGSTROMS) OF 1-493</scope>
    <scope>WD40-LIKE REPEATS</scope>
</reference>
<reference key="7">
    <citation type="journal article" date="2000" name="Proc. Natl. Acad. Sci. U.S.A.">
        <title>Peptide-in-groove interactions link target proteins to the beta-propeller of clathrin.</title>
        <authorList>
            <person name="ter Haar E."/>
            <person name="Harrison S.C."/>
            <person name="Kirchhausen T."/>
        </authorList>
    </citation>
    <scope>X-RAY CRYSTALLOGRAPHY (2.9 ANGSTROMS) OF 1-359</scope>
    <scope>WD40-LIKE REPEATS</scope>
</reference>